<dbReference type="EMBL" id="CP001111">
    <property type="protein sequence ID" value="ACF50563.1"/>
    <property type="molecule type" value="Genomic_DNA"/>
</dbReference>
<dbReference type="RefSeq" id="WP_004154630.1">
    <property type="nucleotide sequence ID" value="NC_011071.1"/>
</dbReference>
<dbReference type="SMR" id="B4SLQ3"/>
<dbReference type="STRING" id="391008.Smal_0858"/>
<dbReference type="KEGG" id="smt:Smal_0858"/>
<dbReference type="eggNOG" id="COG0718">
    <property type="taxonomic scope" value="Bacteria"/>
</dbReference>
<dbReference type="HOGENOM" id="CLU_140930_0_0_6"/>
<dbReference type="OrthoDB" id="9808738at2"/>
<dbReference type="Proteomes" id="UP000001867">
    <property type="component" value="Chromosome"/>
</dbReference>
<dbReference type="GO" id="GO:0043590">
    <property type="term" value="C:bacterial nucleoid"/>
    <property type="evidence" value="ECO:0007669"/>
    <property type="project" value="UniProtKB-UniRule"/>
</dbReference>
<dbReference type="GO" id="GO:0005829">
    <property type="term" value="C:cytosol"/>
    <property type="evidence" value="ECO:0007669"/>
    <property type="project" value="TreeGrafter"/>
</dbReference>
<dbReference type="GO" id="GO:0003677">
    <property type="term" value="F:DNA binding"/>
    <property type="evidence" value="ECO:0007669"/>
    <property type="project" value="UniProtKB-UniRule"/>
</dbReference>
<dbReference type="FunFam" id="3.30.1310.10:FF:000001">
    <property type="entry name" value="Nucleoid-associated protein YbaB"/>
    <property type="match status" value="1"/>
</dbReference>
<dbReference type="Gene3D" id="3.30.1310.10">
    <property type="entry name" value="Nucleoid-associated protein YbaB-like domain"/>
    <property type="match status" value="1"/>
</dbReference>
<dbReference type="HAMAP" id="MF_00274">
    <property type="entry name" value="DNA_YbaB_EbfC"/>
    <property type="match status" value="1"/>
</dbReference>
<dbReference type="InterPro" id="IPR036894">
    <property type="entry name" value="YbaB-like_sf"/>
</dbReference>
<dbReference type="InterPro" id="IPR004401">
    <property type="entry name" value="YbaB/EbfC"/>
</dbReference>
<dbReference type="NCBIfam" id="TIGR00103">
    <property type="entry name" value="DNA_YbaB_EbfC"/>
    <property type="match status" value="1"/>
</dbReference>
<dbReference type="PANTHER" id="PTHR33449">
    <property type="entry name" value="NUCLEOID-ASSOCIATED PROTEIN YBAB"/>
    <property type="match status" value="1"/>
</dbReference>
<dbReference type="PANTHER" id="PTHR33449:SF1">
    <property type="entry name" value="NUCLEOID-ASSOCIATED PROTEIN YBAB"/>
    <property type="match status" value="1"/>
</dbReference>
<dbReference type="Pfam" id="PF02575">
    <property type="entry name" value="YbaB_DNA_bd"/>
    <property type="match status" value="1"/>
</dbReference>
<dbReference type="PIRSF" id="PIRSF004555">
    <property type="entry name" value="UCP004555"/>
    <property type="match status" value="1"/>
</dbReference>
<dbReference type="SUPFAM" id="SSF82607">
    <property type="entry name" value="YbaB-like"/>
    <property type="match status" value="1"/>
</dbReference>
<accession>B4SLQ3</accession>
<reference key="1">
    <citation type="submission" date="2008-06" db="EMBL/GenBank/DDBJ databases">
        <title>Complete sequence of Stenotrophomonas maltophilia R551-3.</title>
        <authorList>
            <consortium name="US DOE Joint Genome Institute"/>
            <person name="Lucas S."/>
            <person name="Copeland A."/>
            <person name="Lapidus A."/>
            <person name="Glavina del Rio T."/>
            <person name="Dalin E."/>
            <person name="Tice H."/>
            <person name="Pitluck S."/>
            <person name="Chain P."/>
            <person name="Malfatti S."/>
            <person name="Shin M."/>
            <person name="Vergez L."/>
            <person name="Lang D."/>
            <person name="Schmutz J."/>
            <person name="Larimer F."/>
            <person name="Land M."/>
            <person name="Hauser L."/>
            <person name="Kyrpides N."/>
            <person name="Mikhailova N."/>
            <person name="Taghavi S."/>
            <person name="Monchy S."/>
            <person name="Newman L."/>
            <person name="Vangronsveld J."/>
            <person name="van der Lelie D."/>
            <person name="Richardson P."/>
        </authorList>
    </citation>
    <scope>NUCLEOTIDE SEQUENCE [LARGE SCALE GENOMIC DNA]</scope>
    <source>
        <strain>R551-3</strain>
    </source>
</reference>
<protein>
    <recommendedName>
        <fullName evidence="1">Nucleoid-associated protein Smal_0858</fullName>
    </recommendedName>
</protein>
<keyword id="KW-0963">Cytoplasm</keyword>
<keyword id="KW-0238">DNA-binding</keyword>
<sequence length="106" mass="11253">MRGNIAQLMQQAQKMQENLQKAQEEIAKIEVTGSAGGGMVSVTLTGAKECRKVRIDPSLASDPEMLEDLIAAAFNDASNKIDAESKSKMGSATAGMQLPPGMKLPF</sequence>
<comment type="function">
    <text evidence="1">Binds to DNA and alters its conformation. May be involved in regulation of gene expression, nucleoid organization and DNA protection.</text>
</comment>
<comment type="subunit">
    <text evidence="1">Homodimer.</text>
</comment>
<comment type="subcellular location">
    <subcellularLocation>
        <location evidence="1">Cytoplasm</location>
        <location evidence="1">Nucleoid</location>
    </subcellularLocation>
</comment>
<comment type="similarity">
    <text evidence="1">Belongs to the YbaB/EbfC family.</text>
</comment>
<evidence type="ECO:0000255" key="1">
    <source>
        <dbReference type="HAMAP-Rule" id="MF_00274"/>
    </source>
</evidence>
<evidence type="ECO:0000256" key="2">
    <source>
        <dbReference type="SAM" id="MobiDB-lite"/>
    </source>
</evidence>
<gene>
    <name type="ordered locus">Smal_0858</name>
</gene>
<proteinExistence type="inferred from homology"/>
<feature type="chain" id="PRO_1000114652" description="Nucleoid-associated protein Smal_0858">
    <location>
        <begin position="1"/>
        <end position="106"/>
    </location>
</feature>
<feature type="region of interest" description="Disordered" evidence="2">
    <location>
        <begin position="81"/>
        <end position="106"/>
    </location>
</feature>
<organism>
    <name type="scientific">Stenotrophomonas maltophilia (strain R551-3)</name>
    <dbReference type="NCBI Taxonomy" id="391008"/>
    <lineage>
        <taxon>Bacteria</taxon>
        <taxon>Pseudomonadati</taxon>
        <taxon>Pseudomonadota</taxon>
        <taxon>Gammaproteobacteria</taxon>
        <taxon>Lysobacterales</taxon>
        <taxon>Lysobacteraceae</taxon>
        <taxon>Stenotrophomonas</taxon>
        <taxon>Stenotrophomonas maltophilia group</taxon>
    </lineage>
</organism>
<name>Y858_STRM5</name>